<evidence type="ECO:0000255" key="1">
    <source>
        <dbReference type="HAMAP-Rule" id="MF_00001"/>
    </source>
</evidence>
<organism>
    <name type="scientific">Brucella anthropi (strain ATCC 49188 / DSM 6882 / CCUG 24695 / JCM 21032 / LMG 3331 / NBRC 15819 / NCTC 12168 / Alc 37)</name>
    <name type="common">Ochrobactrum anthropi</name>
    <dbReference type="NCBI Taxonomy" id="439375"/>
    <lineage>
        <taxon>Bacteria</taxon>
        <taxon>Pseudomonadati</taxon>
        <taxon>Pseudomonadota</taxon>
        <taxon>Alphaproteobacteria</taxon>
        <taxon>Hyphomicrobiales</taxon>
        <taxon>Brucellaceae</taxon>
        <taxon>Brucella/Ochrobactrum group</taxon>
        <taxon>Brucella</taxon>
    </lineage>
</organism>
<keyword id="KW-0665">Pyrimidine biosynthesis</keyword>
<keyword id="KW-1185">Reference proteome</keyword>
<keyword id="KW-0808">Transferase</keyword>
<gene>
    <name evidence="1" type="primary">pyrB</name>
    <name type="ordered locus">Oant_3666</name>
</gene>
<sequence length="322" mass="34704">MTNQTVPPLFPHRHLLGIKGLSPLDILCLLDLADQEIAVSRQPEKKKSVLRGRTQINLFFEASTRTQSSFELAGKRLGADVMNMSVGNSSVKKGETLIDTAMTLNAMQPDILVIRHASAGAAALLAQKVGCSVVNAGDGAHEHPTQALLDALTIRRAKGGIENLIVAICGDVLHSRVARSNILLLNALGARVRVVAPSTLLPSGMADMSVEVFNSMEEGLKDADVVMMLRLQRERMAGSFVPSVREYFRFYGLDKEKLKVAKPDALVMHPGPMNRGVEIASDVADGPQSVIQQQVEMGVAVRMAVMEALLDPRRNPSNGEAA</sequence>
<proteinExistence type="inferred from homology"/>
<accession>A6X568</accession>
<name>PYRB_BRUA4</name>
<reference key="1">
    <citation type="journal article" date="2011" name="J. Bacteriol.">
        <title>Genome of Ochrobactrum anthropi ATCC 49188 T, a versatile opportunistic pathogen and symbiont of several eukaryotic hosts.</title>
        <authorList>
            <person name="Chain P.S."/>
            <person name="Lang D.M."/>
            <person name="Comerci D.J."/>
            <person name="Malfatti S.A."/>
            <person name="Vergez L.M."/>
            <person name="Shin M."/>
            <person name="Ugalde R.A."/>
            <person name="Garcia E."/>
            <person name="Tolmasky M.E."/>
        </authorList>
    </citation>
    <scope>NUCLEOTIDE SEQUENCE [LARGE SCALE GENOMIC DNA]</scope>
    <source>
        <strain>ATCC 49188 / DSM 6882 / CCUG 24695 / JCM 21032 / LMG 3331 / NBRC 15819 / NCTC 12168 / Alc 37</strain>
    </source>
</reference>
<feature type="chain" id="PRO_1000000018" description="Aspartate carbamoyltransferase catalytic subunit">
    <location>
        <begin position="1"/>
        <end position="322"/>
    </location>
</feature>
<feature type="binding site" evidence="1">
    <location>
        <position position="65"/>
    </location>
    <ligand>
        <name>carbamoyl phosphate</name>
        <dbReference type="ChEBI" id="CHEBI:58228"/>
    </ligand>
</feature>
<feature type="binding site" evidence="1">
    <location>
        <position position="66"/>
    </location>
    <ligand>
        <name>carbamoyl phosphate</name>
        <dbReference type="ChEBI" id="CHEBI:58228"/>
    </ligand>
</feature>
<feature type="binding site" evidence="1">
    <location>
        <position position="93"/>
    </location>
    <ligand>
        <name>L-aspartate</name>
        <dbReference type="ChEBI" id="CHEBI:29991"/>
    </ligand>
</feature>
<feature type="binding site" evidence="1">
    <location>
        <position position="115"/>
    </location>
    <ligand>
        <name>carbamoyl phosphate</name>
        <dbReference type="ChEBI" id="CHEBI:58228"/>
    </ligand>
</feature>
<feature type="binding site" evidence="1">
    <location>
        <position position="143"/>
    </location>
    <ligand>
        <name>carbamoyl phosphate</name>
        <dbReference type="ChEBI" id="CHEBI:58228"/>
    </ligand>
</feature>
<feature type="binding site" evidence="1">
    <location>
        <position position="146"/>
    </location>
    <ligand>
        <name>carbamoyl phosphate</name>
        <dbReference type="ChEBI" id="CHEBI:58228"/>
    </ligand>
</feature>
<feature type="binding site" evidence="1">
    <location>
        <position position="176"/>
    </location>
    <ligand>
        <name>L-aspartate</name>
        <dbReference type="ChEBI" id="CHEBI:29991"/>
    </ligand>
</feature>
<feature type="binding site" evidence="1">
    <location>
        <position position="230"/>
    </location>
    <ligand>
        <name>L-aspartate</name>
        <dbReference type="ChEBI" id="CHEBI:29991"/>
    </ligand>
</feature>
<feature type="binding site" evidence="1">
    <location>
        <position position="271"/>
    </location>
    <ligand>
        <name>carbamoyl phosphate</name>
        <dbReference type="ChEBI" id="CHEBI:58228"/>
    </ligand>
</feature>
<feature type="binding site" evidence="1">
    <location>
        <position position="272"/>
    </location>
    <ligand>
        <name>carbamoyl phosphate</name>
        <dbReference type="ChEBI" id="CHEBI:58228"/>
    </ligand>
</feature>
<dbReference type="EC" id="2.1.3.2" evidence="1"/>
<dbReference type="EMBL" id="CP000759">
    <property type="protein sequence ID" value="ABS16372.1"/>
    <property type="molecule type" value="Genomic_DNA"/>
</dbReference>
<dbReference type="RefSeq" id="WP_012093049.1">
    <property type="nucleotide sequence ID" value="NC_009668.1"/>
</dbReference>
<dbReference type="SMR" id="A6X568"/>
<dbReference type="STRING" id="439375.Oant_3666"/>
<dbReference type="KEGG" id="oan:Oant_3666"/>
<dbReference type="eggNOG" id="COG0540">
    <property type="taxonomic scope" value="Bacteria"/>
</dbReference>
<dbReference type="HOGENOM" id="CLU_043846_2_0_5"/>
<dbReference type="PhylomeDB" id="A6X568"/>
<dbReference type="UniPathway" id="UPA00070">
    <property type="reaction ID" value="UER00116"/>
</dbReference>
<dbReference type="Proteomes" id="UP000002301">
    <property type="component" value="Chromosome 2"/>
</dbReference>
<dbReference type="GO" id="GO:0005829">
    <property type="term" value="C:cytosol"/>
    <property type="evidence" value="ECO:0007669"/>
    <property type="project" value="TreeGrafter"/>
</dbReference>
<dbReference type="GO" id="GO:0016597">
    <property type="term" value="F:amino acid binding"/>
    <property type="evidence" value="ECO:0007669"/>
    <property type="project" value="InterPro"/>
</dbReference>
<dbReference type="GO" id="GO:0004070">
    <property type="term" value="F:aspartate carbamoyltransferase activity"/>
    <property type="evidence" value="ECO:0007669"/>
    <property type="project" value="UniProtKB-UniRule"/>
</dbReference>
<dbReference type="GO" id="GO:0006207">
    <property type="term" value="P:'de novo' pyrimidine nucleobase biosynthetic process"/>
    <property type="evidence" value="ECO:0007669"/>
    <property type="project" value="InterPro"/>
</dbReference>
<dbReference type="GO" id="GO:0044205">
    <property type="term" value="P:'de novo' UMP biosynthetic process"/>
    <property type="evidence" value="ECO:0007669"/>
    <property type="project" value="UniProtKB-UniRule"/>
</dbReference>
<dbReference type="GO" id="GO:0006520">
    <property type="term" value="P:amino acid metabolic process"/>
    <property type="evidence" value="ECO:0007669"/>
    <property type="project" value="InterPro"/>
</dbReference>
<dbReference type="FunFam" id="3.40.50.1370:FF:000007">
    <property type="entry name" value="Aspartate carbamoyltransferase"/>
    <property type="match status" value="1"/>
</dbReference>
<dbReference type="Gene3D" id="3.40.50.1370">
    <property type="entry name" value="Aspartate/ornithine carbamoyltransferase"/>
    <property type="match status" value="2"/>
</dbReference>
<dbReference type="HAMAP" id="MF_00001">
    <property type="entry name" value="Asp_carb_tr"/>
    <property type="match status" value="1"/>
</dbReference>
<dbReference type="InterPro" id="IPR006132">
    <property type="entry name" value="Asp/Orn_carbamoyltranf_P-bd"/>
</dbReference>
<dbReference type="InterPro" id="IPR006130">
    <property type="entry name" value="Asp/Orn_carbamoylTrfase"/>
</dbReference>
<dbReference type="InterPro" id="IPR036901">
    <property type="entry name" value="Asp/Orn_carbamoylTrfase_sf"/>
</dbReference>
<dbReference type="InterPro" id="IPR002082">
    <property type="entry name" value="Asp_carbamoyltransf"/>
</dbReference>
<dbReference type="InterPro" id="IPR006131">
    <property type="entry name" value="Asp_carbamoyltransf_Asp/Orn-bd"/>
</dbReference>
<dbReference type="NCBIfam" id="TIGR00670">
    <property type="entry name" value="asp_carb_tr"/>
    <property type="match status" value="1"/>
</dbReference>
<dbReference type="NCBIfam" id="NF002032">
    <property type="entry name" value="PRK00856.1"/>
    <property type="match status" value="1"/>
</dbReference>
<dbReference type="PANTHER" id="PTHR45753:SF6">
    <property type="entry name" value="ASPARTATE CARBAMOYLTRANSFERASE"/>
    <property type="match status" value="1"/>
</dbReference>
<dbReference type="PANTHER" id="PTHR45753">
    <property type="entry name" value="ORNITHINE CARBAMOYLTRANSFERASE, MITOCHONDRIAL"/>
    <property type="match status" value="1"/>
</dbReference>
<dbReference type="Pfam" id="PF00185">
    <property type="entry name" value="OTCace"/>
    <property type="match status" value="1"/>
</dbReference>
<dbReference type="Pfam" id="PF02729">
    <property type="entry name" value="OTCace_N"/>
    <property type="match status" value="1"/>
</dbReference>
<dbReference type="PRINTS" id="PR00100">
    <property type="entry name" value="AOTCASE"/>
</dbReference>
<dbReference type="PRINTS" id="PR00101">
    <property type="entry name" value="ATCASE"/>
</dbReference>
<dbReference type="SUPFAM" id="SSF53671">
    <property type="entry name" value="Aspartate/ornithine carbamoyltransferase"/>
    <property type="match status" value="1"/>
</dbReference>
<dbReference type="PROSITE" id="PS00097">
    <property type="entry name" value="CARBAMOYLTRANSFERASE"/>
    <property type="match status" value="1"/>
</dbReference>
<comment type="function">
    <text evidence="1">Catalyzes the condensation of carbamoyl phosphate and aspartate to form carbamoyl aspartate and inorganic phosphate, the committed step in the de novo pyrimidine nucleotide biosynthesis pathway.</text>
</comment>
<comment type="catalytic activity">
    <reaction evidence="1">
        <text>carbamoyl phosphate + L-aspartate = N-carbamoyl-L-aspartate + phosphate + H(+)</text>
        <dbReference type="Rhea" id="RHEA:20013"/>
        <dbReference type="ChEBI" id="CHEBI:15378"/>
        <dbReference type="ChEBI" id="CHEBI:29991"/>
        <dbReference type="ChEBI" id="CHEBI:32814"/>
        <dbReference type="ChEBI" id="CHEBI:43474"/>
        <dbReference type="ChEBI" id="CHEBI:58228"/>
        <dbReference type="EC" id="2.1.3.2"/>
    </reaction>
</comment>
<comment type="pathway">
    <text evidence="1">Pyrimidine metabolism; UMP biosynthesis via de novo pathway; (S)-dihydroorotate from bicarbonate: step 2/3.</text>
</comment>
<comment type="subunit">
    <text evidence="1">Heterododecamer (2C3:3R2) of six catalytic PyrB chains organized as two trimers (C3), and six regulatory PyrI chains organized as three dimers (R2).</text>
</comment>
<comment type="similarity">
    <text evidence="1">Belongs to the aspartate/ornithine carbamoyltransferase superfamily. ATCase family.</text>
</comment>
<protein>
    <recommendedName>
        <fullName evidence="1">Aspartate carbamoyltransferase catalytic subunit</fullName>
        <ecNumber evidence="1">2.1.3.2</ecNumber>
    </recommendedName>
    <alternativeName>
        <fullName evidence="1">Aspartate transcarbamylase</fullName>
        <shortName evidence="1">ATCase</shortName>
    </alternativeName>
</protein>